<name>FABP3_CAEEL</name>
<keyword id="KW-0002">3D-structure</keyword>
<keyword id="KW-0446">Lipid-binding</keyword>
<keyword id="KW-1185">Reference proteome</keyword>
<keyword id="KW-0964">Secreted</keyword>
<keyword id="KW-0732">Signal</keyword>
<keyword id="KW-0813">Transport</keyword>
<gene>
    <name type="primary">lbp-3</name>
    <name type="ORF">F40F4.4</name>
</gene>
<reference key="1">
    <citation type="journal article" date="1998" name="Science">
        <title>Genome sequence of the nematode C. elegans: a platform for investigating biology.</title>
        <authorList>
            <consortium name="The C. elegans sequencing consortium"/>
        </authorList>
    </citation>
    <scope>NUCLEOTIDE SEQUENCE [LARGE SCALE GENOMIC DNA]</scope>
    <source>
        <strain>Bristol N2</strain>
    </source>
</reference>
<reference key="2">
    <citation type="journal article" date="2000" name="Mol. Biochem. Parasitol.">
        <title>Secretion of a novel class of iFABPs in nematodes: coordinate use of the Ascaris/Caenorhabditis model systems.</title>
        <authorList>
            <person name="Plenefisch J."/>
            <person name="Xiao H."/>
            <person name="Mei B."/>
            <person name="Geng J."/>
            <person name="Komuniecki P.R."/>
            <person name="Komuniecki R."/>
        </authorList>
    </citation>
    <scope>FUNCTION</scope>
    <scope>SUBCELLULAR LOCATION</scope>
    <scope>TISSUE SPECIFICITY</scope>
</reference>
<proteinExistence type="evidence at protein level"/>
<accession>Q20222</accession>
<sequence>MNLYLTLFSFCFLAIMAEAASEIPEKFFGKYDLDRSENFDEFLAAKGVSWFVRQMIKLAKVSKVLAKNETPGKYNMENLTSKKNTLYHGWELGKTFEAEGLDGVAHKITFSFKDGVLSEHHIRLNDPEHSAETYYYTIENDQLVMKMVNNGITCRRWFKRSTGKK</sequence>
<evidence type="ECO:0000250" key="1"/>
<evidence type="ECO:0000255" key="2"/>
<evidence type="ECO:0000269" key="3">
    <source>
    </source>
</evidence>
<evidence type="ECO:0000305" key="4"/>
<dbReference type="EMBL" id="FO081243">
    <property type="protein sequence ID" value="CCD70143.1"/>
    <property type="molecule type" value="Genomic_DNA"/>
</dbReference>
<dbReference type="PIR" id="T16308">
    <property type="entry name" value="T16308"/>
</dbReference>
<dbReference type="RefSeq" id="NP_001041249.1">
    <property type="nucleotide sequence ID" value="NM_001047784.4"/>
</dbReference>
<dbReference type="RefSeq" id="NP_001379901.1">
    <property type="nucleotide sequence ID" value="NM_001392744.1"/>
</dbReference>
<dbReference type="PDB" id="9DXI">
    <property type="method" value="X-ray"/>
    <property type="resolution" value="2.17 A"/>
    <property type="chains" value="A/B=16-165"/>
</dbReference>
<dbReference type="PDBsum" id="9DXI"/>
<dbReference type="SMR" id="Q20222"/>
<dbReference type="BioGRID" id="45556">
    <property type="interactions" value="1"/>
</dbReference>
<dbReference type="FunCoup" id="Q20222">
    <property type="interactions" value="105"/>
</dbReference>
<dbReference type="STRING" id="6239.F40F4.4a.1"/>
<dbReference type="PaxDb" id="6239-F40F4.4a"/>
<dbReference type="PeptideAtlas" id="Q20222"/>
<dbReference type="EnsemblMetazoa" id="F40F4.4a.1">
    <property type="protein sequence ID" value="F40F4.4a.1"/>
    <property type="gene ID" value="WBGene00002255"/>
</dbReference>
<dbReference type="GeneID" id="180615"/>
<dbReference type="UCSC" id="F40F4.4a">
    <property type="organism name" value="c. elegans"/>
</dbReference>
<dbReference type="AGR" id="WB:WBGene00002255"/>
<dbReference type="WormBase" id="F40F4.4a">
    <property type="protein sequence ID" value="CE30130"/>
    <property type="gene ID" value="WBGene00002255"/>
    <property type="gene designation" value="lbp-3"/>
</dbReference>
<dbReference type="eggNOG" id="KOG4015">
    <property type="taxonomic scope" value="Eukaryota"/>
</dbReference>
<dbReference type="InParanoid" id="Q20222"/>
<dbReference type="OMA" id="TCRRWFK"/>
<dbReference type="OrthoDB" id="412780at2759"/>
<dbReference type="PhylomeDB" id="Q20222"/>
<dbReference type="PRO" id="PR:Q20222"/>
<dbReference type="Proteomes" id="UP000001940">
    <property type="component" value="Chromosome X"/>
</dbReference>
<dbReference type="Bgee" id="WBGene00002255">
    <property type="expression patterns" value="Expressed in larva and 3 other cell types or tissues"/>
</dbReference>
<dbReference type="ExpressionAtlas" id="Q20222">
    <property type="expression patterns" value="baseline and differential"/>
</dbReference>
<dbReference type="GO" id="GO:0005576">
    <property type="term" value="C:extracellular region"/>
    <property type="evidence" value="ECO:0007669"/>
    <property type="project" value="UniProtKB-SubCell"/>
</dbReference>
<dbReference type="GO" id="GO:0008289">
    <property type="term" value="F:lipid binding"/>
    <property type="evidence" value="ECO:0007669"/>
    <property type="project" value="UniProtKB-KW"/>
</dbReference>
<dbReference type="CDD" id="cd00742">
    <property type="entry name" value="FABP"/>
    <property type="match status" value="1"/>
</dbReference>
<dbReference type="Gene3D" id="2.40.128.20">
    <property type="match status" value="1"/>
</dbReference>
<dbReference type="InterPro" id="IPR012674">
    <property type="entry name" value="Calycin"/>
</dbReference>
<dbReference type="InterPro" id="IPR000463">
    <property type="entry name" value="Fatty_acid-bd"/>
</dbReference>
<dbReference type="InterPro" id="IPR040094">
    <property type="entry name" value="Lbp1-4"/>
</dbReference>
<dbReference type="PANTHER" id="PTHR22725">
    <property type="entry name" value="FATTY ACID-BINDING PROTEIN HOMOLOG 1-RELATED-RELATED"/>
    <property type="match status" value="1"/>
</dbReference>
<dbReference type="PANTHER" id="PTHR22725:SF9">
    <property type="entry name" value="FATTY ACID-BINDING PROTEIN HOMOLOG 3"/>
    <property type="match status" value="1"/>
</dbReference>
<dbReference type="PRINTS" id="PR00178">
    <property type="entry name" value="FATTYACIDBP"/>
</dbReference>
<dbReference type="SUPFAM" id="SSF50814">
    <property type="entry name" value="Lipocalins"/>
    <property type="match status" value="1"/>
</dbReference>
<dbReference type="PROSITE" id="PS00214">
    <property type="entry name" value="FABP"/>
    <property type="match status" value="1"/>
</dbReference>
<feature type="signal peptide" evidence="2">
    <location>
        <begin position="1"/>
        <end position="19"/>
    </location>
</feature>
<feature type="chain" id="PRO_0000008739" description="Fatty acid-binding protein homolog 3">
    <location>
        <begin position="20"/>
        <end position="165"/>
    </location>
</feature>
<comment type="function">
    <text evidence="3">May play a role in sequestering potentially toxic fatty acids and their peroxidation products, or it may be involved in the maintenance of the impermeable lipid layer of the eggshell.</text>
</comment>
<comment type="subcellular location">
    <subcellularLocation>
        <location evidence="3">Secreted</location>
    </subcellularLocation>
    <text>From muscle into the perienteric fluid.</text>
</comment>
<comment type="tissue specificity">
    <text evidence="3">Expressed in presumptive hypodermal cells by the comma stage and in posterior body wall muscle cells by the two-fold stage. From L1 to adult stages, expression continues in body wall muscle cells adjacent to the pseudocoelom, while hypodermal expression is extinguished.</text>
</comment>
<comment type="domain">
    <text evidence="1">Forms a beta-barrel structure that accommodates hydrophobic ligands in its interior.</text>
</comment>
<comment type="similarity">
    <text evidence="4">Belongs to the calycin superfamily. Fatty-acid binding protein (FABP) family.</text>
</comment>
<protein>
    <recommendedName>
        <fullName>Fatty acid-binding protein homolog 3</fullName>
    </recommendedName>
    <alternativeName>
        <fullName>Lipid-binding protein 3</fullName>
    </alternativeName>
</protein>
<organism>
    <name type="scientific">Caenorhabditis elegans</name>
    <dbReference type="NCBI Taxonomy" id="6239"/>
    <lineage>
        <taxon>Eukaryota</taxon>
        <taxon>Metazoa</taxon>
        <taxon>Ecdysozoa</taxon>
        <taxon>Nematoda</taxon>
        <taxon>Chromadorea</taxon>
        <taxon>Rhabditida</taxon>
        <taxon>Rhabditina</taxon>
        <taxon>Rhabditomorpha</taxon>
        <taxon>Rhabditoidea</taxon>
        <taxon>Rhabditidae</taxon>
        <taxon>Peloderinae</taxon>
        <taxon>Caenorhabditis</taxon>
    </lineage>
</organism>